<organism>
    <name type="scientific">Salmonella typhi</name>
    <dbReference type="NCBI Taxonomy" id="90370"/>
    <lineage>
        <taxon>Bacteria</taxon>
        <taxon>Pseudomonadati</taxon>
        <taxon>Pseudomonadota</taxon>
        <taxon>Gammaproteobacteria</taxon>
        <taxon>Enterobacterales</taxon>
        <taxon>Enterobacteriaceae</taxon>
        <taxon>Salmonella</taxon>
    </lineage>
</organism>
<sequence>MTQLAIGEATPHGATYDGHGVNFTLFSAHAERVELCVFDSRGNERRYDLPGRRGDVWHGYLAGARPGLRYGYRVHGPWQPAQGHRFNPAKLLLDPYARQVEGELKDHPLLHGGHDEPDYRDNAAVAPKSVVISDHYDWEDDAAPRTPWGKTVIYEAHVKGLTYLHPELPQEIRGTYKALGHPVMVAYFKQLGITALELLPVAQFASEPRLQRMGLTNYWGYNPMAMFALHPAWASSPETALDEFRDAVKALHRAGIEVILDIVLNHSAELDLDGPTFSLRGIDNRSYYWIRDDGDYHNWTGCGNTLNLSHPGVVEYACECLRYWMETCHVDGFRFDLASVMGRTPTFRQDAPLFAAIKACPVLSTVKLIAEPWDIGEGGYQVGNFPPPFAEWNDHFRDAARRFWLPRNLTTGEFACRFAASSDVFKRNGRAPGASVNLLTAHDGFTLRDCVCFNQKHNEANGEENRDGTNSNYSDNHGKEGLGGPLDLMERRRDSIHALLATLLLSQGTPMLLAGDEHGHSQHGNNNAYCQDNALTWLDWQQANRGLTTFTAALIRLRQQIPALTGNSWWEEGDGNVRWLNKNAQPLSADEWQNGPKLMQILLSDRFLIAINATLEVTDIVLPEGEWRAVPPFAGEDNPVITAVWQGLCVFQRG</sequence>
<evidence type="ECO:0000255" key="1">
    <source>
        <dbReference type="HAMAP-Rule" id="MF_01248"/>
    </source>
</evidence>
<evidence type="ECO:0000256" key="2">
    <source>
        <dbReference type="SAM" id="MobiDB-lite"/>
    </source>
</evidence>
<reference key="1">
    <citation type="journal article" date="2001" name="Nature">
        <title>Complete genome sequence of a multiple drug resistant Salmonella enterica serovar Typhi CT18.</title>
        <authorList>
            <person name="Parkhill J."/>
            <person name="Dougan G."/>
            <person name="James K.D."/>
            <person name="Thomson N.R."/>
            <person name="Pickard D."/>
            <person name="Wain J."/>
            <person name="Churcher C.M."/>
            <person name="Mungall K.L."/>
            <person name="Bentley S.D."/>
            <person name="Holden M.T.G."/>
            <person name="Sebaihia M."/>
            <person name="Baker S."/>
            <person name="Basham D."/>
            <person name="Brooks K."/>
            <person name="Chillingworth T."/>
            <person name="Connerton P."/>
            <person name="Cronin A."/>
            <person name="Davis P."/>
            <person name="Davies R.M."/>
            <person name="Dowd L."/>
            <person name="White N."/>
            <person name="Farrar J."/>
            <person name="Feltwell T."/>
            <person name="Hamlin N."/>
            <person name="Haque A."/>
            <person name="Hien T.T."/>
            <person name="Holroyd S."/>
            <person name="Jagels K."/>
            <person name="Krogh A."/>
            <person name="Larsen T.S."/>
            <person name="Leather S."/>
            <person name="Moule S."/>
            <person name="O'Gaora P."/>
            <person name="Parry C."/>
            <person name="Quail M.A."/>
            <person name="Rutherford K.M."/>
            <person name="Simmonds M."/>
            <person name="Skelton J."/>
            <person name="Stevens K."/>
            <person name="Whitehead S."/>
            <person name="Barrell B.G."/>
        </authorList>
    </citation>
    <scope>NUCLEOTIDE SEQUENCE [LARGE SCALE GENOMIC DNA]</scope>
    <source>
        <strain>CT18</strain>
    </source>
</reference>
<reference key="2">
    <citation type="journal article" date="2003" name="J. Bacteriol.">
        <title>Comparative genomics of Salmonella enterica serovar Typhi strains Ty2 and CT18.</title>
        <authorList>
            <person name="Deng W."/>
            <person name="Liou S.-R."/>
            <person name="Plunkett G. III"/>
            <person name="Mayhew G.F."/>
            <person name="Rose D.J."/>
            <person name="Burland V."/>
            <person name="Kodoyianni V."/>
            <person name="Schwartz D.C."/>
            <person name="Blattner F.R."/>
        </authorList>
    </citation>
    <scope>NUCLEOTIDE SEQUENCE [LARGE SCALE GENOMIC DNA]</scope>
    <source>
        <strain>ATCC 700931 / Ty2</strain>
    </source>
</reference>
<name>GLGX_SALTI</name>
<dbReference type="EC" id="3.2.1.196" evidence="1"/>
<dbReference type="EMBL" id="AL513382">
    <property type="protein sequence ID" value="CAD08091.1"/>
    <property type="molecule type" value="Genomic_DNA"/>
</dbReference>
<dbReference type="EMBL" id="AE014613">
    <property type="protein sequence ID" value="AAO71453.1"/>
    <property type="molecule type" value="Genomic_DNA"/>
</dbReference>
<dbReference type="RefSeq" id="NP_458381.1">
    <property type="nucleotide sequence ID" value="NC_003198.1"/>
</dbReference>
<dbReference type="RefSeq" id="WP_000192475.1">
    <property type="nucleotide sequence ID" value="NZ_WSUR01000001.1"/>
</dbReference>
<dbReference type="SMR" id="Q8Z234"/>
<dbReference type="STRING" id="220341.gene:17588104"/>
<dbReference type="KEGG" id="stt:t3983"/>
<dbReference type="KEGG" id="sty:STY4273"/>
<dbReference type="PATRIC" id="fig|220341.7.peg.4366"/>
<dbReference type="eggNOG" id="COG1523">
    <property type="taxonomic scope" value="Bacteria"/>
</dbReference>
<dbReference type="HOGENOM" id="CLU_011725_1_1_6"/>
<dbReference type="OMA" id="ADYTGCG"/>
<dbReference type="OrthoDB" id="3236218at2"/>
<dbReference type="UniPathway" id="UPA00165"/>
<dbReference type="Proteomes" id="UP000000541">
    <property type="component" value="Chromosome"/>
</dbReference>
<dbReference type="Proteomes" id="UP000002670">
    <property type="component" value="Chromosome"/>
</dbReference>
<dbReference type="GO" id="GO:0004133">
    <property type="term" value="F:glycogen debranching enzyme activity"/>
    <property type="evidence" value="ECO:0007669"/>
    <property type="project" value="UniProtKB-UniRule"/>
</dbReference>
<dbReference type="GO" id="GO:0004553">
    <property type="term" value="F:hydrolase activity, hydrolyzing O-glycosyl compounds"/>
    <property type="evidence" value="ECO:0007669"/>
    <property type="project" value="InterPro"/>
</dbReference>
<dbReference type="GO" id="GO:0005980">
    <property type="term" value="P:glycogen catabolic process"/>
    <property type="evidence" value="ECO:0007669"/>
    <property type="project" value="UniProtKB-UniRule"/>
</dbReference>
<dbReference type="CDD" id="cd11326">
    <property type="entry name" value="AmyAc_Glg_debranch"/>
    <property type="match status" value="1"/>
</dbReference>
<dbReference type="CDD" id="cd02856">
    <property type="entry name" value="E_set_GDE_Isoamylase_N"/>
    <property type="match status" value="1"/>
</dbReference>
<dbReference type="FunFam" id="2.60.40.10:FF:000468">
    <property type="entry name" value="Glycogen debranching enzyme"/>
    <property type="match status" value="1"/>
</dbReference>
<dbReference type="Gene3D" id="3.20.20.80">
    <property type="entry name" value="Glycosidases"/>
    <property type="match status" value="1"/>
</dbReference>
<dbReference type="Gene3D" id="2.60.40.1180">
    <property type="entry name" value="Golgi alpha-mannosidase II"/>
    <property type="match status" value="1"/>
</dbReference>
<dbReference type="Gene3D" id="2.60.40.10">
    <property type="entry name" value="Immunoglobulins"/>
    <property type="match status" value="1"/>
</dbReference>
<dbReference type="HAMAP" id="MF_01248">
    <property type="entry name" value="GlgX"/>
    <property type="match status" value="1"/>
</dbReference>
<dbReference type="InterPro" id="IPR040784">
    <property type="entry name" value="GlgX_C"/>
</dbReference>
<dbReference type="InterPro" id="IPR044505">
    <property type="entry name" value="GlgX_Isoamylase_N_E_set"/>
</dbReference>
<dbReference type="InterPro" id="IPR006047">
    <property type="entry name" value="Glyco_hydro_13_cat_dom"/>
</dbReference>
<dbReference type="InterPro" id="IPR004193">
    <property type="entry name" value="Glyco_hydro_13_N"/>
</dbReference>
<dbReference type="InterPro" id="IPR013780">
    <property type="entry name" value="Glyco_hydro_b"/>
</dbReference>
<dbReference type="InterPro" id="IPR022844">
    <property type="entry name" value="Glycogen_debranch_bac"/>
</dbReference>
<dbReference type="InterPro" id="IPR011837">
    <property type="entry name" value="Glycogen_debranch_GlgX"/>
</dbReference>
<dbReference type="InterPro" id="IPR017853">
    <property type="entry name" value="Glycoside_hydrolase_SF"/>
</dbReference>
<dbReference type="InterPro" id="IPR013783">
    <property type="entry name" value="Ig-like_fold"/>
</dbReference>
<dbReference type="InterPro" id="IPR014756">
    <property type="entry name" value="Ig_E-set"/>
</dbReference>
<dbReference type="NCBIfam" id="TIGR02100">
    <property type="entry name" value="glgX_debranch"/>
    <property type="match status" value="1"/>
</dbReference>
<dbReference type="NCBIfam" id="NF002983">
    <property type="entry name" value="PRK03705.1"/>
    <property type="match status" value="1"/>
</dbReference>
<dbReference type="PANTHER" id="PTHR43002">
    <property type="entry name" value="GLYCOGEN DEBRANCHING ENZYME"/>
    <property type="match status" value="1"/>
</dbReference>
<dbReference type="Pfam" id="PF00128">
    <property type="entry name" value="Alpha-amylase"/>
    <property type="match status" value="1"/>
</dbReference>
<dbReference type="Pfam" id="PF02922">
    <property type="entry name" value="CBM_48"/>
    <property type="match status" value="1"/>
</dbReference>
<dbReference type="Pfam" id="PF18390">
    <property type="entry name" value="GlgX_C"/>
    <property type="match status" value="1"/>
</dbReference>
<dbReference type="SMART" id="SM00642">
    <property type="entry name" value="Aamy"/>
    <property type="match status" value="1"/>
</dbReference>
<dbReference type="SUPFAM" id="SSF51445">
    <property type="entry name" value="(Trans)glycosidases"/>
    <property type="match status" value="1"/>
</dbReference>
<dbReference type="SUPFAM" id="SSF81296">
    <property type="entry name" value="E set domains"/>
    <property type="match status" value="1"/>
</dbReference>
<keyword id="KW-0119">Carbohydrate metabolism</keyword>
<keyword id="KW-0321">Glycogen metabolism</keyword>
<keyword id="KW-0326">Glycosidase</keyword>
<keyword id="KW-0378">Hydrolase</keyword>
<gene>
    <name evidence="1" type="primary">glgX</name>
    <name type="ordered locus">STY4273</name>
    <name type="ordered locus">t3983</name>
</gene>
<comment type="function">
    <text evidence="1">Removes maltotriose and maltotetraose chains that are attached by 1,6-alpha-linkage to the limit dextrin main chain, generating a debranched limit dextrin.</text>
</comment>
<comment type="catalytic activity">
    <reaction evidence="1">
        <text>Hydrolysis of (1-&gt;6)-alpha-D-glucosidic linkages to branches with degrees of polymerization of three or four glucose residues in limit dextrin.</text>
        <dbReference type="EC" id="3.2.1.196"/>
    </reaction>
</comment>
<comment type="pathway">
    <text evidence="1">Glycan degradation; glycogen degradation.</text>
</comment>
<comment type="similarity">
    <text evidence="1">Belongs to the glycosyl hydrolase 13 family.</text>
</comment>
<protein>
    <recommendedName>
        <fullName evidence="1">Glycogen debranching enzyme</fullName>
        <ecNumber evidence="1">3.2.1.196</ecNumber>
    </recommendedName>
    <alternativeName>
        <fullName evidence="1">Limit dextrin alpha-1,6-maltotetraose-hydrolase</fullName>
    </alternativeName>
</protein>
<feature type="chain" id="PRO_0000054301" description="Glycogen debranching enzyme">
    <location>
        <begin position="1"/>
        <end position="654"/>
    </location>
</feature>
<feature type="region of interest" description="Disordered" evidence="2">
    <location>
        <begin position="459"/>
        <end position="484"/>
    </location>
</feature>
<feature type="active site" description="Nucleophile" evidence="1">
    <location>
        <position position="336"/>
    </location>
</feature>
<feature type="active site" description="Proton donor" evidence="1">
    <location>
        <position position="371"/>
    </location>
</feature>
<feature type="site" description="Transition state stabilizer" evidence="1">
    <location>
        <position position="443"/>
    </location>
</feature>
<accession>Q8Z234</accession>
<proteinExistence type="inferred from homology"/>